<feature type="chain" id="PRO_0000430720" description="GDP-perosamine synthase">
    <location>
        <begin position="1"/>
        <end position="364"/>
    </location>
</feature>
<feature type="modified residue" description="N6-(pyridoxal phosphate)lysine" evidence="1">
    <location>
        <position position="183"/>
    </location>
</feature>
<gene>
    <name evidence="6" type="primary">perA</name>
    <name evidence="5" type="synonym">per</name>
    <name evidence="7" type="synonym">rfbE</name>
    <name evidence="9" type="ordered locus">Z3200</name>
    <name evidence="10" type="ordered locus">ECs2841</name>
</gene>
<name>GDPPS_ECO57</name>
<organism>
    <name type="scientific">Escherichia coli O157:H7</name>
    <dbReference type="NCBI Taxonomy" id="83334"/>
    <lineage>
        <taxon>Bacteria</taxon>
        <taxon>Pseudomonadati</taxon>
        <taxon>Pseudomonadota</taxon>
        <taxon>Gammaproteobacteria</taxon>
        <taxon>Enterobacterales</taxon>
        <taxon>Enterobacteriaceae</taxon>
        <taxon>Escherichia</taxon>
    </lineage>
</organism>
<reference key="1">
    <citation type="journal article" date="2001" name="Nature">
        <title>Genome sequence of enterohaemorrhagic Escherichia coli O157:H7.</title>
        <authorList>
            <person name="Perna N.T."/>
            <person name="Plunkett G. III"/>
            <person name="Burland V."/>
            <person name="Mau B."/>
            <person name="Glasner J.D."/>
            <person name="Rose D.J."/>
            <person name="Mayhew G.F."/>
            <person name="Evans P.S."/>
            <person name="Gregor J."/>
            <person name="Kirkpatrick H.A."/>
            <person name="Posfai G."/>
            <person name="Hackett J."/>
            <person name="Klink S."/>
            <person name="Boutin A."/>
            <person name="Shao Y."/>
            <person name="Miller L."/>
            <person name="Grotbeck E.J."/>
            <person name="Davis N.W."/>
            <person name="Lim A."/>
            <person name="Dimalanta E.T."/>
            <person name="Potamousis K."/>
            <person name="Apodaca J."/>
            <person name="Anantharaman T.S."/>
            <person name="Lin J."/>
            <person name="Yen G."/>
            <person name="Schwartz D.C."/>
            <person name="Welch R.A."/>
            <person name="Blattner F.R."/>
        </authorList>
    </citation>
    <scope>NUCLEOTIDE SEQUENCE [LARGE SCALE GENOMIC DNA]</scope>
    <source>
        <strain>O157:H7 / EDL933 / ATCC 700927 / EHEC</strain>
    </source>
</reference>
<reference key="2">
    <citation type="journal article" date="2001" name="DNA Res.">
        <title>Complete genome sequence of enterohemorrhagic Escherichia coli O157:H7 and genomic comparison with a laboratory strain K-12.</title>
        <authorList>
            <person name="Hayashi T."/>
            <person name="Makino K."/>
            <person name="Ohnishi M."/>
            <person name="Kurokawa K."/>
            <person name="Ishii K."/>
            <person name="Yokoyama K."/>
            <person name="Han C.-G."/>
            <person name="Ohtsubo E."/>
            <person name="Nakayama K."/>
            <person name="Murata T."/>
            <person name="Tanaka M."/>
            <person name="Tobe T."/>
            <person name="Iida T."/>
            <person name="Takami H."/>
            <person name="Honda T."/>
            <person name="Sasakawa C."/>
            <person name="Ogasawara N."/>
            <person name="Yasunaga T."/>
            <person name="Kuhara S."/>
            <person name="Shiba T."/>
            <person name="Hattori M."/>
            <person name="Shinagawa H."/>
        </authorList>
    </citation>
    <scope>NUCLEOTIDE SEQUENCE [LARGE SCALE GENOMIC DNA]</scope>
    <source>
        <strain>O157:H7 / Sakai / RIMD 0509952 / EHEC</strain>
    </source>
</reference>
<reference key="3">
    <citation type="journal article" date="1996" name="Infect. Immun.">
        <title>Role of the Escherichia coli O157:H7 O side chain in adherence and analysis of an rfb locus.</title>
        <authorList>
            <person name="Bilge S.S."/>
            <person name="Vary J.C. Jr."/>
            <person name="Dowell S.F."/>
            <person name="Tarr P.I."/>
        </authorList>
    </citation>
    <scope>DISRUPTION PHENOTYPE</scope>
    <scope>PATHWAY</scope>
    <source>
        <strain>O157:H7 / 86-24 / EHEC</strain>
    </source>
</reference>
<reference key="4">
    <citation type="journal article" date="2007" name="Biochem. Biophys. Res. Commun.">
        <title>Cloning and characterization of GDP-perosamine synthetase (Per) from Escherichia coli O157:H7 and synthesis of GDP-perosamine in vitro.</title>
        <authorList>
            <person name="Zhao G."/>
            <person name="Liu J."/>
            <person name="Liu X."/>
            <person name="Chen M."/>
            <person name="Zhang H."/>
            <person name="Wang P.G."/>
        </authorList>
    </citation>
    <scope>FUNCTION</scope>
    <scope>CATALYTIC ACTIVITY</scope>
    <scope>COFACTOR</scope>
    <scope>ACTIVITY REGULATION</scope>
    <scope>BIOPHYSICOCHEMICAL PROPERTIES</scope>
    <scope>SUBUNIT</scope>
    <source>
        <strain>O157:H7 / EHEC</strain>
    </source>
</reference>
<reference key="5">
    <citation type="journal article" date="2008" name="FEBS Lett.">
        <title>Identification of the GDP-N-acetyl-d-perosamine producing enzymes from Escherichia coli O157:H7.</title>
        <authorList>
            <person name="Albermann C."/>
            <person name="Beuttler H."/>
        </authorList>
    </citation>
    <scope>FUNCTION</scope>
    <scope>CATALYTIC ACTIVITY</scope>
    <scope>COFACTOR</scope>
    <scope>BIOPHYSICOCHEMICAL PROPERTIES</scope>
    <scope>SUBUNIT</scope>
    <source>
        <strain>O157:H7 / EHEC</strain>
    </source>
</reference>
<accession>Q7DBF3</accession>
<accession>Q7ACQ1</accession>
<keyword id="KW-0032">Aminotransferase</keyword>
<keyword id="KW-0448">Lipopolysaccharide biosynthesis</keyword>
<keyword id="KW-0663">Pyridoxal phosphate</keyword>
<keyword id="KW-1185">Reference proteome</keyword>
<keyword id="KW-0808">Transferase</keyword>
<sequence length="364" mass="41554">MKYIPVYQPSLTGKEKEYVNECLDSTWISSKGNYIQKFENKFAEQNHVQYATTVSNGTVALHLALLALGISEGDEVIVPTLTYIASVNAIKYTGATPIFVDSDNETWQMSVSDIEQKITNKTKAIMCVHLYGHPCDMEQIVELAKSRNLFVIEDCAEAFGSKYKGKYVGTFGDISTFSFFGNKTITTGEGGMVVTNDKTLYDRCLHFKGQGLAVHRQYWHDVIGYNYRMTNICAAIGLAQLEQADDFISRKREIADIYKKNINSLVQVHKESKDVFHTYWMVSILTRTAEEREELRNHLADKLIETRPVFYPVHTMPMYSEKYQKHPIAEDLGWRGINLPSFPSLSNEQVIYICESINEFYSDK</sequence>
<evidence type="ECO:0000250" key="1">
    <source>
        <dbReference type="UniProtKB" id="Q8ZNF3"/>
    </source>
</evidence>
<evidence type="ECO:0000269" key="2">
    <source>
    </source>
</evidence>
<evidence type="ECO:0000269" key="3">
    <source>
    </source>
</evidence>
<evidence type="ECO:0000269" key="4">
    <source>
    </source>
</evidence>
<evidence type="ECO:0000303" key="5">
    <source>
    </source>
</evidence>
<evidence type="ECO:0000303" key="6">
    <source>
    </source>
</evidence>
<evidence type="ECO:0000303" key="7">
    <source>
    </source>
</evidence>
<evidence type="ECO:0000305" key="8"/>
<evidence type="ECO:0000312" key="9">
    <source>
        <dbReference type="EMBL" id="AAG57096.1"/>
    </source>
</evidence>
<evidence type="ECO:0000312" key="10">
    <source>
        <dbReference type="EMBL" id="BAB36264.2"/>
    </source>
</evidence>
<protein>
    <recommendedName>
        <fullName evidence="8">GDP-perosamine synthase</fullName>
        <ecNumber evidence="2 3">2.6.1.102</ecNumber>
    </recommendedName>
</protein>
<dbReference type="EC" id="2.6.1.102" evidence="2 3"/>
<dbReference type="EMBL" id="AE005174">
    <property type="protein sequence ID" value="AAG57096.1"/>
    <property type="molecule type" value="Genomic_DNA"/>
</dbReference>
<dbReference type="EMBL" id="BA000007">
    <property type="protein sequence ID" value="BAB36264.2"/>
    <property type="molecule type" value="Genomic_DNA"/>
</dbReference>
<dbReference type="RefSeq" id="NP_310868.1">
    <property type="nucleotide sequence ID" value="NC_002695.1"/>
</dbReference>
<dbReference type="RefSeq" id="WP_000875215.1">
    <property type="nucleotide sequence ID" value="NZ_VOAI01000013.1"/>
</dbReference>
<dbReference type="SMR" id="Q7DBF3"/>
<dbReference type="STRING" id="155864.Z3200"/>
<dbReference type="KEGG" id="ece:Z3200"/>
<dbReference type="KEGG" id="ecs:ECs_2841"/>
<dbReference type="PATRIC" id="fig|386585.9.peg.2974"/>
<dbReference type="eggNOG" id="COG0399">
    <property type="taxonomic scope" value="Bacteria"/>
</dbReference>
<dbReference type="HOGENOM" id="CLU_033332_7_2_6"/>
<dbReference type="OMA" id="GKNSEFH"/>
<dbReference type="BioCyc" id="MetaCyc:MONOMER-21547"/>
<dbReference type="UniPathway" id="UPA00281"/>
<dbReference type="Proteomes" id="UP000000558">
    <property type="component" value="Chromosome"/>
</dbReference>
<dbReference type="Proteomes" id="UP000002519">
    <property type="component" value="Chromosome"/>
</dbReference>
<dbReference type="GO" id="GO:0102933">
    <property type="term" value="F:GDP-4-dehydro-6-deoxy-D-mannose-4-aminotransferase activity"/>
    <property type="evidence" value="ECO:0007669"/>
    <property type="project" value="UniProtKB-EC"/>
</dbReference>
<dbReference type="GO" id="GO:0030170">
    <property type="term" value="F:pyridoxal phosphate binding"/>
    <property type="evidence" value="ECO:0007669"/>
    <property type="project" value="TreeGrafter"/>
</dbReference>
<dbReference type="GO" id="GO:0009243">
    <property type="term" value="P:O antigen biosynthetic process"/>
    <property type="evidence" value="ECO:0007669"/>
    <property type="project" value="UniProtKB-UniPathway"/>
</dbReference>
<dbReference type="CDD" id="cd00616">
    <property type="entry name" value="AHBA_syn"/>
    <property type="match status" value="1"/>
</dbReference>
<dbReference type="FunFam" id="3.40.640.10:FF:000090">
    <property type="entry name" value="Pyridoxal phosphate-dependent aminotransferase"/>
    <property type="match status" value="1"/>
</dbReference>
<dbReference type="Gene3D" id="3.90.1150.10">
    <property type="entry name" value="Aspartate Aminotransferase, domain 1"/>
    <property type="match status" value="1"/>
</dbReference>
<dbReference type="Gene3D" id="3.40.640.10">
    <property type="entry name" value="Type I PLP-dependent aspartate aminotransferase-like (Major domain)"/>
    <property type="match status" value="1"/>
</dbReference>
<dbReference type="InterPro" id="IPR000653">
    <property type="entry name" value="DegT/StrS_aminotransferase"/>
</dbReference>
<dbReference type="InterPro" id="IPR015424">
    <property type="entry name" value="PyrdxlP-dep_Trfase"/>
</dbReference>
<dbReference type="InterPro" id="IPR015421">
    <property type="entry name" value="PyrdxlP-dep_Trfase_major"/>
</dbReference>
<dbReference type="InterPro" id="IPR015422">
    <property type="entry name" value="PyrdxlP-dep_Trfase_small"/>
</dbReference>
<dbReference type="PANTHER" id="PTHR30244:SF34">
    <property type="entry name" value="DTDP-4-AMINO-4,6-DIDEOXYGALACTOSE TRANSAMINASE"/>
    <property type="match status" value="1"/>
</dbReference>
<dbReference type="PANTHER" id="PTHR30244">
    <property type="entry name" value="TRANSAMINASE"/>
    <property type="match status" value="1"/>
</dbReference>
<dbReference type="Pfam" id="PF01041">
    <property type="entry name" value="DegT_DnrJ_EryC1"/>
    <property type="match status" value="1"/>
</dbReference>
<dbReference type="PIRSF" id="PIRSF000390">
    <property type="entry name" value="PLP_StrS"/>
    <property type="match status" value="1"/>
</dbReference>
<dbReference type="SUPFAM" id="SSF53383">
    <property type="entry name" value="PLP-dependent transferases"/>
    <property type="match status" value="1"/>
</dbReference>
<comment type="function">
    <text evidence="2 3">Catalyzes the synthesis of GDP-perosamine from GDP-4-keto-6-deoxy-D-mannose and L-glutamate. Can use only L-glutamate as amino donor.</text>
</comment>
<comment type="catalytic activity">
    <reaction evidence="2 3">
        <text>GDP-alpha-D-perosamine + 2-oxoglutarate = GDP-4-dehydro-alpha-D-rhamnose + L-glutamate</text>
        <dbReference type="Rhea" id="RHEA:36779"/>
        <dbReference type="ChEBI" id="CHEBI:16810"/>
        <dbReference type="ChEBI" id="CHEBI:29985"/>
        <dbReference type="ChEBI" id="CHEBI:57964"/>
        <dbReference type="ChEBI" id="CHEBI:73996"/>
        <dbReference type="EC" id="2.6.1.102"/>
    </reaction>
</comment>
<comment type="cofactor">
    <cofactor evidence="2 3">
        <name>pyridoxal 5'-phosphate</name>
        <dbReference type="ChEBI" id="CHEBI:597326"/>
    </cofactor>
</comment>
<comment type="activity regulation">
    <text evidence="2">Divalent ions have no significant effect on activity.</text>
</comment>
<comment type="biophysicochemical properties">
    <kinetics>
        <KM evidence="2">0.09 mM for GDP-4-keto-6-deoxy-D-mannose</KM>
        <KM evidence="3">0.07 mM for GDP-4-keto-6-deoxy-D-mannose</KM>
        <KM evidence="2">2 mM for L-glutamate</KM>
        <KM evidence="3">2.3 mM for L-glutamate</KM>
        <text evidence="2">kcat is 18.98 sec(-1) for GDP-4-keto-6-deoxy-D-mannose. kcat is 10.41 sec(-1) for L-glutamate.</text>
    </kinetics>
    <phDependence>
        <text evidence="2 3">Optimum pH is 7.5.</text>
    </phDependence>
</comment>
<comment type="pathway">
    <text evidence="4">Bacterial outer membrane biogenesis; LPS O-antigen biosynthesis.</text>
</comment>
<comment type="subunit">
    <text evidence="2 3">Homodecamer.</text>
</comment>
<comment type="disruption phenotype">
    <text evidence="4">Mutant is deficient in expression of the O157 LPS antigen. Increases adherence to cultured epithelial cells.</text>
</comment>
<comment type="similarity">
    <text evidence="8">Belongs to the DegT/DnrJ/EryC1 family.</text>
</comment>
<proteinExistence type="evidence at protein level"/>